<dbReference type="EMBL" id="AAFI02000013">
    <property type="protein sequence ID" value="EEU04125.1"/>
    <property type="molecule type" value="Genomic_DNA"/>
</dbReference>
<dbReference type="RefSeq" id="XP_002649177.1">
    <property type="nucleotide sequence ID" value="XM_002649131.1"/>
</dbReference>
<dbReference type="FunCoup" id="Q869L3">
    <property type="interactions" value="222"/>
</dbReference>
<dbReference type="STRING" id="44689.Q869L3"/>
<dbReference type="GlyGen" id="Q869L3">
    <property type="glycosylation" value="3 sites"/>
</dbReference>
<dbReference type="PaxDb" id="44689-DDB0252730"/>
<dbReference type="EnsemblProtists" id="EEU04125">
    <property type="protein sequence ID" value="EEU04125"/>
    <property type="gene ID" value="DDB_G0295765"/>
</dbReference>
<dbReference type="GeneID" id="8620042"/>
<dbReference type="KEGG" id="ddi:DDB_G0295765"/>
<dbReference type="dictyBase" id="DDB_G0295765">
    <property type="gene designation" value="mdn1"/>
</dbReference>
<dbReference type="VEuPathDB" id="AmoebaDB:DDB_G0295765"/>
<dbReference type="eggNOG" id="KOG1808">
    <property type="taxonomic scope" value="Eukaryota"/>
</dbReference>
<dbReference type="HOGENOM" id="CLU_000050_0_2_1"/>
<dbReference type="InParanoid" id="Q869L3"/>
<dbReference type="OMA" id="ILEQWHR"/>
<dbReference type="PhylomeDB" id="Q869L3"/>
<dbReference type="PRO" id="PR:Q869L3"/>
<dbReference type="Proteomes" id="UP000002195">
    <property type="component" value="Chromosome 2"/>
</dbReference>
<dbReference type="GO" id="GO:0005730">
    <property type="term" value="C:nucleolus"/>
    <property type="evidence" value="ECO:0007669"/>
    <property type="project" value="UniProtKB-SubCell"/>
</dbReference>
<dbReference type="GO" id="GO:0005654">
    <property type="term" value="C:nucleoplasm"/>
    <property type="evidence" value="ECO:0007669"/>
    <property type="project" value="UniProtKB-SubCell"/>
</dbReference>
<dbReference type="GO" id="GO:0005634">
    <property type="term" value="C:nucleus"/>
    <property type="evidence" value="ECO:0000318"/>
    <property type="project" value="GO_Central"/>
</dbReference>
<dbReference type="GO" id="GO:0030687">
    <property type="term" value="C:preribosome, large subunit precursor"/>
    <property type="evidence" value="ECO:0000318"/>
    <property type="project" value="GO_Central"/>
</dbReference>
<dbReference type="GO" id="GO:0005524">
    <property type="term" value="F:ATP binding"/>
    <property type="evidence" value="ECO:0007669"/>
    <property type="project" value="UniProtKB-KW"/>
</dbReference>
<dbReference type="GO" id="GO:0016887">
    <property type="term" value="F:ATP hydrolysis activity"/>
    <property type="evidence" value="ECO:0007669"/>
    <property type="project" value="InterPro"/>
</dbReference>
<dbReference type="GO" id="GO:0000027">
    <property type="term" value="P:ribosomal large subunit assembly"/>
    <property type="evidence" value="ECO:0000318"/>
    <property type="project" value="GO_Central"/>
</dbReference>
<dbReference type="GO" id="GO:0000055">
    <property type="term" value="P:ribosomal large subunit export from nucleus"/>
    <property type="evidence" value="ECO:0000318"/>
    <property type="project" value="GO_Central"/>
</dbReference>
<dbReference type="CDD" id="cd00009">
    <property type="entry name" value="AAA"/>
    <property type="match status" value="2"/>
</dbReference>
<dbReference type="CDD" id="cd01460">
    <property type="entry name" value="vWA_midasin"/>
    <property type="match status" value="1"/>
</dbReference>
<dbReference type="FunFam" id="3.40.50.300:FF:000142">
    <property type="entry name" value="Midasin"/>
    <property type="match status" value="1"/>
</dbReference>
<dbReference type="FunFam" id="3.40.50.300:FF:000582">
    <property type="entry name" value="Midasin"/>
    <property type="match status" value="1"/>
</dbReference>
<dbReference type="FunFam" id="3.40.50.300:FF:000764">
    <property type="entry name" value="Midasin"/>
    <property type="match status" value="1"/>
</dbReference>
<dbReference type="FunFam" id="3.40.50.300:FF:000919">
    <property type="entry name" value="Midasin"/>
    <property type="match status" value="1"/>
</dbReference>
<dbReference type="FunFam" id="3.40.50.300:FF:001368">
    <property type="entry name" value="Midasin"/>
    <property type="match status" value="1"/>
</dbReference>
<dbReference type="FunFam" id="3.40.50.410:FF:000092">
    <property type="entry name" value="Midasin"/>
    <property type="match status" value="1"/>
</dbReference>
<dbReference type="Gene3D" id="3.40.50.300">
    <property type="entry name" value="P-loop containing nucleotide triphosphate hydrolases"/>
    <property type="match status" value="7"/>
</dbReference>
<dbReference type="Gene3D" id="3.40.50.410">
    <property type="entry name" value="von Willebrand factor, type A domain"/>
    <property type="match status" value="1"/>
</dbReference>
<dbReference type="InterPro" id="IPR003593">
    <property type="entry name" value="AAA+_ATPase"/>
</dbReference>
<dbReference type="InterPro" id="IPR040848">
    <property type="entry name" value="AAA_lid_7"/>
</dbReference>
<dbReference type="InterPro" id="IPR011704">
    <property type="entry name" value="ATPase_dyneun-rel_AAA"/>
</dbReference>
<dbReference type="InterPro" id="IPR048617">
    <property type="entry name" value="MDN1_AAA_lid_4"/>
</dbReference>
<dbReference type="InterPro" id="IPR012099">
    <property type="entry name" value="Midasin"/>
</dbReference>
<dbReference type="InterPro" id="IPR041190">
    <property type="entry name" value="Midasin_AAA_lid_5"/>
</dbReference>
<dbReference type="InterPro" id="IPR027417">
    <property type="entry name" value="P-loop_NTPase"/>
</dbReference>
<dbReference type="InterPro" id="IPR025662">
    <property type="entry name" value="Sigma_54_int_dom_ATP-bd_1"/>
</dbReference>
<dbReference type="InterPro" id="IPR002035">
    <property type="entry name" value="VWF_A"/>
</dbReference>
<dbReference type="InterPro" id="IPR036465">
    <property type="entry name" value="vWFA_dom_sf"/>
</dbReference>
<dbReference type="PANTHER" id="PTHR48103:SF2">
    <property type="entry name" value="MIDASIN"/>
    <property type="match status" value="1"/>
</dbReference>
<dbReference type="PANTHER" id="PTHR48103">
    <property type="entry name" value="MIDASIN-RELATED"/>
    <property type="match status" value="1"/>
</dbReference>
<dbReference type="Pfam" id="PF07728">
    <property type="entry name" value="AAA_5"/>
    <property type="match status" value="7"/>
</dbReference>
<dbReference type="Pfam" id="PF17865">
    <property type="entry name" value="AAA_lid_5"/>
    <property type="match status" value="1"/>
</dbReference>
<dbReference type="Pfam" id="PF17867">
    <property type="entry name" value="AAA_lid_7"/>
    <property type="match status" value="3"/>
</dbReference>
<dbReference type="Pfam" id="PF21108">
    <property type="entry name" value="MDN1_4th"/>
    <property type="match status" value="1"/>
</dbReference>
<dbReference type="PIRSF" id="PIRSF010340">
    <property type="entry name" value="Midasin"/>
    <property type="match status" value="1"/>
</dbReference>
<dbReference type="SMART" id="SM00382">
    <property type="entry name" value="AAA"/>
    <property type="match status" value="5"/>
</dbReference>
<dbReference type="SMART" id="SM00327">
    <property type="entry name" value="VWA"/>
    <property type="match status" value="1"/>
</dbReference>
<dbReference type="SUPFAM" id="SSF52540">
    <property type="entry name" value="P-loop containing nucleoside triphosphate hydrolases"/>
    <property type="match status" value="6"/>
</dbReference>
<dbReference type="SUPFAM" id="SSF53300">
    <property type="entry name" value="vWA-like"/>
    <property type="match status" value="1"/>
</dbReference>
<dbReference type="PROSITE" id="PS00675">
    <property type="entry name" value="SIGMA54_INTERACT_1"/>
    <property type="match status" value="1"/>
</dbReference>
<dbReference type="PROSITE" id="PS50234">
    <property type="entry name" value="VWFA"/>
    <property type="match status" value="1"/>
</dbReference>
<accession>Q869L3</accession>
<accession>C7FZZ7</accession>
<sequence length="5900" mass="678735">MYKFKFNIFKAIKALELELTKIKNESSSSTIIQDFKSFEQIFKKKENEFTSQDKLFIVEEISNLLMSKPEYPSLISNIFSPLLVDLVSRYIQNGKKEERWLGLVQSCFRLLSFNKSLFSSLWDWTPLFSLLEIKSQRITWYVIKSMSMVLNVPDHQITQIKPLFKQYHNQIIQIESELLNLESSKLFLNNNNNNNNKKENINNNQEEEKEDEELINKYPNIFIQKQDLHKSIVDVCGILLFKKFEQIGHGSSVKSKKGGEQQQEGEGEDEQVQKLVYTNTVSQNLNSLAIAVGLGKPILIEGVTGSGKTTMIEELSRITGNDNIIRIHLGDQTDSKVLLGTYITSDTPGEFKWQAGALTQAVQEGRWILIEDIDLAPIEVLSVLIPLLENRTLFIPGRGEVIEASNGFQLFATQTLFGSHSRDQNANILSHLWTRVVIEALSPTEMKQVLLTLFPQLTVMISKFIETFNLLLRVISNQSISISPTDEVAGIANIANTANVNNINNNNNTDNNNNNNSNEKFIIPSSRFISSRDLIKWIRRCNQRLHLTNVSQQIITSTMQEIVFVEALDCFCSMISKKNLRKQLTQVIGRVWELTGDRINYYVELYKPSIIITQESVSTGRAKLKSLEKSDSIQISNGKKHTRFTTEQSQQDSGVTKHGNVFAHTMNSLRLMEKISISIQFNEPILLVGETGTGKTSVVQYIADQLNQKLVVLNLNQQSDSSDLIGGFKPVEMRLLCLPLKNRFDSMFKKTFSESNNTDFLEKIDKAFISKNWKQFIALLNKAIKLVENKVLKDDQTTTNNTKENNNNNNNNNNNNNNNNNNKKRTIRSEVKEKWIKLSNDIKKLTIQFEKSKNNFAFSFVEGSLVNCIRKGYWVLLDEMNLATSETLESLSGLFDGGSITLTEKGEVEPVERHPNFKVFACMNPPTDIGKKDLPPGIRNRFTEYYVDDLDNRGDLCLVVKTVLSNLVPNPPIEDIVEFYLKTKQDAQNKMLDGSNQKPIFSLRTLSRALNYTKHVTKSFGFQRALFEGISMSFLTQLNKSSYPMMEQLIKQYIKKGEVKLYNQPLNRPPPTSTTNNNNNNAEESYVKIEQFWIECGNEKPIIPTHYILTPSIKSNLSNIARVLVSRKHPILLQGPTSSGKTSMVEYLAIRTGHRFIRINNHEHTDLQEYLGQYISDDKGKLVFQEGILVEAVRKGYWVVLDELNLAPSEVLEALNRLLDDNRELFIPETQEVVRPHPHFMLFATQNPPGLYGGRKVLSRAFRNRFLELHVDDIPEDELEEILCKRCALPPSYCKKLVLIMKELQLNRQGSNQVFAGKHGAITFRDLFRWAERQPSSYEELGIAGYQLLAERLRKDEEKLIIKQVIEKHLKIKLDIESIYSCDDKPEFLKLLQLLSENDSELSKSNHLEKIVWTRSMKRLFSLVGKCLEHKEPILLVGETGCSKTTICQLYSILNKQKLHILNCHQHTETADFIGGLRPVRGRDQVLSKLYSLVKQYFNQLSQLNLYKLEQENNNIDELPIKEIMERLIVESWKQVSNSSLLTEQLKQLAIEIDKTYSSYCSLFNWVDGPLVEAMKQGDYFLIDEISLAEDAVLERLNSVLEPSRLLVLAEKGGVEIEELRGHKEFRILATMNPGGDFGKKELSPAMRNRFTEIWVPAISSHQDLLQIIEERFTSPQLKGKGSLMLNFIEYLLMIQKNKRVISLRDILSWISFMNLCMDKQLLSPNESYIHGACLVLLDGFGMGSNSSSESEGLKLREACLIRLIDQIESQDEKLKLQTELLSTSSSSSSLSSSIANIIKEENRFGIHPFYIPVRESNVPKIQFSLSAPTTSKNAQRVLRGMQLPRAILVEGSPGVGKTSLITAIANASGNQIVRINLSEQTDIMDLLGSDLPVEGGTGGQFEWRDGVFLEALRNGSWVLLDELNLASQTVLEGLNSCLDHRSEVYIPELGKTFACHPNFRVFACQNPLHQGGGRKGLPKSFLNRFTQVFIDQLNQQDLLFISTAMYPTIPSKTIERMIEFNHQMFKESMIEHKFARKGAPWEFNLRDTFRWCDLIVKDPTSISNPARFIDLIYLQRMRTLQDREHVLTIFKRVFTTSGDENDQSIDMMPTICNYDKQPHYSISPEYLQIGSSILPRVQNGGASSFDSSVLDNSSNIQLLQRLLNPLENIMKCIEMNWMSILIGPTSTSKTSSIRLLAQLTGNTLYEFSMNSSVDTTEILGGFEQIDLVRYQKRIISSVSSLITIVSSHIMTYFNSNDDNLMKTCISSIQDIHQVWNLFKKQTQQTQQQIQQDGATIGSGGVGLITIEQLDLLSTIVDALEKLSIQFNLDNNQEHLNRIQDVRQQIQRIKSIEKESVTGCFEWIDGLLIKALETGAWILIDNVNFCNPTVLDRLNPLLEQDGVLMLNERGMVDGQVKVVKPHPNFRIFLTMDDKKGEISRAMRNRGIEIYMAADQLSLMETPSNNFDNQQLLTALGIPLESLTRTMIDFHNQIFTQLSSTIENPCTLSQLLYWGKLILDQLQRGFSLLNSIRNSMEQIYIRPRRHLTQRQLVTNIFNSIFNESAIKSILCEDQTVLGIYPHFIKGKDYVTDSISTTMKMNYQFFEYYLKRLMNSLSSSSSSSSQQQQQDESNYKISAKFLIENINSSQYENYVLYLNSLKDQNEKDSPINQLLTTLISCMKQLFNHTCYKDFEKRLEQLLSMINLSFIDSKQLLIYQGHQWKNNDSLFLLIKEKVDNYITKEAGGSESMIPIKDLFNQVLLNDMEIIKSLLSLFIQSSKQEKEYNKFLKQVQQGNASQQLSVKSIKSIPVILLSLAYTKKMMSKDLLPHQDIISMIYRLFKSLDEQIDQWLIQLSSSEQQQSTFSTIQIINQLILLKNNFWNSTFNLPSNQFNLGEFIIRWRWIYKEINKLTTLTSKSESPLLINTGLQVLIDKISSGLNQYNNDNSNNRLWKVGGYPMVMKSNHLVQLDSQFLSILEKVQYNFNKNESPIKHSSYAIDEDWKKTLIEAISTLYWANYQLNSDNQNQEQQQQELDRVSEFLTNLELVPQTLSDKLKQLIEKQKQFELNSTFNPVSTNFDNSDISNDSMISDATSIHFDPLSIKHQVISISPLIDHSLHLKETFVISELVKLLMLQHMDIENGKMNQSIITIFESIIDELKYIVNKYKSSTIPRSLYHLAFYQKLIWMIDNYLEKVTTNQEKDEQGQEQEQASIGIIELQSVIHSILYVYNSSQWNNAFNDISHVGKYSLPQYKYRLSKNDAAASLDNGSSKVNIYDSIRFGYGPPRLFQNIQTVFSFYLTCDWEYVSIADVPVKIEQLNQIIQHLTSADGSSNVSNIESFEYQIKQTIALLLSTITSFYKSFNNDEHKKHQLLSNVALIGEHLLSSSSSLEILDIGFDELIENIKELIIQSNDKSFNEKSKQLLLPCLDILLCLDDKVLYKDELKLQSTFGRLQLLLNTFRLIMFVPSGSIDPTQKYDVILQYSKEHSKQLQDEIEIRTIIEKQYTGKDGTSLVIDELVQKKQSIDQKLALDSKKITLRPIPSQFEELYRDVSQFSNHFSNIEKIIDLISKLDLSQVKNEFNLEVESEGGDNQQQQENNTSANSSYNQMILSTEQMWQEKANHFIQSCEKKFYSRYRDIIVPIITAVYQMKSGLRMMSVSFKQKVQDNKLGGNQGITKQIQKVLLSLTQFPRINSVDINSKITTTSTTTTATTTTNTTSNNILLDKLTLDSIKDMMKFNQRTNQDNCNGGLQNFKVIGLLLRSSLCQIYSQLSNSNYLDVDNLEAIDSIFRIFVQEWRFQEEEKRKKEELENQEFKYKVQTHKMETKEEKDEKVFLTSFPNFYKDFEDLEVANVVENQIDDDNDEENKDKENNESNVLTSEDGSMFFKSSINNEEILQLCSIHRDIFKHLDGIPIPKEQQQWTLSDRDRSELFQLFYSSSYLLMKILNQRSGDMEFDQLSLGSHILSASNLKETLSIRPPSLITYSKLDEKFRFLKTSSYLYKKSKGINDDDGDNQVVDVIHQKKTYNIYRDSNISEIGIIREPLISFRKRVFELLVEYPEQANLTLMVKLIDRLMTYPATDPLAKILTGLELLLRKSLEWESFASKAVSIQNHLNEISSLIVRWRKLEIESWPSIFQSQEKEAEVKALKSWFILYDLINDEPSSPELEDENLSKNFHTLQQYLYSSSLGDFLTRIELLKSFYKQLNSTIKLIGTSKNTNYKQKLSDIIYNIFKYFENFISRFEDRLAKSIKPIEDKALEFIRLSRWDDNRLLTQYERLKQHIEVSHRNLAKVTIKYKNVLAQPLHDIFTQIENELDIPPLVLHSGAATILEDKLKKNQKLNKKQIQKKSLAIENFNDWLSFSPSNYSIDRKSIDSISKPIEIESPLLKKLFQIENEKLAQNKLSLLSKRMIQICKENLLESDSWKVVRDGVDIINDLSIEIIDRLKELSSDEKIKRQEKEFALKELMSKFHEMGLSYHINRYPQEQLQISYLFNVRHLPTISDNQGYLPTSFSKITADNGAKLLDQADQYYYRIVSRVHRLRQLSIEYNSDLSSKHVQRINGYVEHFLSIIINQRNNLIDSINSWNHLTLFTELFTNISGSGGSNSEIDEQIFNNHNMLSKWFEIQRESINQFNQAIKEILLLCRKTTSAVSGGMISTIIPEICSIQIIIESIKSEIDKHQSKLRNLFSFLNNQYPMMTWSTINLIISIFTKFKEIKEKLNQLLLSKLSNINYIKSPIQILINNIDSLINKFNSEYEELVGNEINDNDIENQNNIKEFTNQFGILIDQILISIQDLKIQSNQIIAYNKEQEELDQELEKVREYTIEDGSISKLSEFIDHQVQSLRLSKLLEQFVKLHNIIVDGGGSVSTLSIYRQMIKQMGPLLAQFMLIVNQSIVDSLSYHKTCCKLEYISTGVFIQLYSKGFCKPADGGDDGEGGEGGRSNFEDDVEGTGMGEGKGKKDVSDQLEDQGQIEDTNTQKKEEKDEDEDEEKEEKDEDEGFDMQDDFEGEMHDIKKDENKDEDKKDDPNNEKENDKEMGDLEKPEDNVVDEKLWDEQDVQDEEEQDEEGKGDETNSEEMMAKQDGKDDNDDDKKDDDKKDDKKKKKEENGKPDENEEGEEGKDDEEEDGKDDNKNADDGASDEDDFGQEENEDDVINQEQEKEENHGDPRGDDQMEIPEDLELEDPDEGKEDDEQQDGGDDFKDPLDEMDGDDVSKEEEKKKELDGDEKEESDQDGDEEKEDEEKEDGDEDEDKEDKENQPIDPSNVDSINPEGDEPEKEQPEEDQTSLTTNEQQDETPKDSEQPLGVKDKTGSKSNVSNTDEEMKDESNQDNADDDSGMTQPTPSENDTGALKNLKSQPPPQSSAQQPPKKQKQVDPNPYRSMGDANKEWKKRLNLKQEQEEEEEEQSSEPKEKAPKQDPNAKENENQDYEFIKDDEKLDKDEETDQALAAATDTQLQDIPQNKAQDDQAEQEEDQMDIDEEDDMDVDHKQEVEHQDDSKQQLDENKKISMSKLKQDQLKQQKEKEKEKLEKDQQDGQDDELDGLNQKEQFTKEQLENLTNLDKEKAVLDDGDDQEMEQDGDQDDEESVEEKKLTREDLDRMRQELEQYKIENSSNPEIGTELWKKYEQLTNDLSQDLCEQLRLILEPTLATKLQGDYKSGKRINMKKVIPYIASQFKKDKIWLRRTKPNKRQYQVLLAIDDTESMAAYHSGGFALEAMTMISRAMSRLEVGQLGIVRFGEDVQLVHSFDQVFSDQTGPEIITQFKFQQTKTNMVNFLSKTLQIMDMNKQSSSGEPAMQLVFIVSDGWSLRDPETTKKYLREASIKNVFIVFIVIDNPVNNNSILDFESISFNNGKIQRTNYMSEFPFMYYVILRSLNNIPSILSDTLRQWFDLTKSTQ</sequence>
<comment type="function">
    <text evidence="1">Nuclear chaperone required for maturation and nuclear export of pre-60S ribosome subunits. Functions at successive maturation steps to remove ribosomal factors at critical transition points, first driving the exit of early pre-60S particles from the nucleolus and then driving late pre-60S particles from the nucleus.</text>
</comment>
<comment type="subunit">
    <text evidence="1">Associates with pre-60S ribosomes in the nucleoplasm.</text>
</comment>
<comment type="subcellular location">
    <subcellularLocation>
        <location evidence="1">Nucleus</location>
        <location evidence="1">Nucleolus</location>
    </subcellularLocation>
    <subcellularLocation>
        <location evidence="1">Nucleus</location>
        <location evidence="1">Nucleoplasm</location>
    </subcellularLocation>
</comment>
<comment type="similarity">
    <text evidence="5">Belongs to the midasin family.</text>
</comment>
<protein>
    <recommendedName>
        <fullName>Midasin</fullName>
    </recommendedName>
    <alternativeName>
        <fullName>Dynein-related AAA-ATPase mdn1</fullName>
    </alternativeName>
    <alternativeName>
        <fullName>MIDAS-containing protein</fullName>
    </alternativeName>
</protein>
<reference key="1">
    <citation type="journal article" date="2002" name="Nature">
        <title>Sequence and analysis of chromosome 2 of Dictyostelium discoideum.</title>
        <authorList>
            <person name="Gloeckner G."/>
            <person name="Eichinger L."/>
            <person name="Szafranski K."/>
            <person name="Pachebat J.A."/>
            <person name="Bankier A.T."/>
            <person name="Dear P.H."/>
            <person name="Lehmann R."/>
            <person name="Baumgart C."/>
            <person name="Parra G."/>
            <person name="Abril J.F."/>
            <person name="Guigo R."/>
            <person name="Kumpf K."/>
            <person name="Tunggal B."/>
            <person name="Cox E.C."/>
            <person name="Quail M.A."/>
            <person name="Platzer M."/>
            <person name="Rosenthal A."/>
            <person name="Noegel A.A."/>
        </authorList>
    </citation>
    <scope>NUCLEOTIDE SEQUENCE [LARGE SCALE GENOMIC DNA]</scope>
    <source>
        <strain>AX4</strain>
    </source>
</reference>
<reference key="2">
    <citation type="journal article" date="2005" name="Nature">
        <title>The genome of the social amoeba Dictyostelium discoideum.</title>
        <authorList>
            <person name="Eichinger L."/>
            <person name="Pachebat J.A."/>
            <person name="Gloeckner G."/>
            <person name="Rajandream M.A."/>
            <person name="Sucgang R."/>
            <person name="Berriman M."/>
            <person name="Song J."/>
            <person name="Olsen R."/>
            <person name="Szafranski K."/>
            <person name="Xu Q."/>
            <person name="Tunggal B."/>
            <person name="Kummerfeld S."/>
            <person name="Madera M."/>
            <person name="Konfortov B.A."/>
            <person name="Rivero F."/>
            <person name="Bankier A.T."/>
            <person name="Lehmann R."/>
            <person name="Hamlin N."/>
            <person name="Davies R."/>
            <person name="Gaudet P."/>
            <person name="Fey P."/>
            <person name="Pilcher K."/>
            <person name="Chen G."/>
            <person name="Saunders D."/>
            <person name="Sodergren E.J."/>
            <person name="Davis P."/>
            <person name="Kerhornou A."/>
            <person name="Nie X."/>
            <person name="Hall N."/>
            <person name="Anjard C."/>
            <person name="Hemphill L."/>
            <person name="Bason N."/>
            <person name="Farbrother P."/>
            <person name="Desany B."/>
            <person name="Just E."/>
            <person name="Morio T."/>
            <person name="Rost R."/>
            <person name="Churcher C.M."/>
            <person name="Cooper J."/>
            <person name="Haydock S."/>
            <person name="van Driessche N."/>
            <person name="Cronin A."/>
            <person name="Goodhead I."/>
            <person name="Muzny D.M."/>
            <person name="Mourier T."/>
            <person name="Pain A."/>
            <person name="Lu M."/>
            <person name="Harper D."/>
            <person name="Lindsay R."/>
            <person name="Hauser H."/>
            <person name="James K.D."/>
            <person name="Quiles M."/>
            <person name="Madan Babu M."/>
            <person name="Saito T."/>
            <person name="Buchrieser C."/>
            <person name="Wardroper A."/>
            <person name="Felder M."/>
            <person name="Thangavelu M."/>
            <person name="Johnson D."/>
            <person name="Knights A."/>
            <person name="Loulseged H."/>
            <person name="Mungall K.L."/>
            <person name="Oliver K."/>
            <person name="Price C."/>
            <person name="Quail M.A."/>
            <person name="Urushihara H."/>
            <person name="Hernandez J."/>
            <person name="Rabbinowitsch E."/>
            <person name="Steffen D."/>
            <person name="Sanders M."/>
            <person name="Ma J."/>
            <person name="Kohara Y."/>
            <person name="Sharp S."/>
            <person name="Simmonds M.N."/>
            <person name="Spiegler S."/>
            <person name="Tivey A."/>
            <person name="Sugano S."/>
            <person name="White B."/>
            <person name="Walker D."/>
            <person name="Woodward J.R."/>
            <person name="Winckler T."/>
            <person name="Tanaka Y."/>
            <person name="Shaulsky G."/>
            <person name="Schleicher M."/>
            <person name="Weinstock G.M."/>
            <person name="Rosenthal A."/>
            <person name="Cox E.C."/>
            <person name="Chisholm R.L."/>
            <person name="Gibbs R.A."/>
            <person name="Loomis W.F."/>
            <person name="Platzer M."/>
            <person name="Kay R.R."/>
            <person name="Williams J.G."/>
            <person name="Dear P.H."/>
            <person name="Noegel A.A."/>
            <person name="Barrell B.G."/>
            <person name="Kuspa A."/>
        </authorList>
    </citation>
    <scope>NUCLEOTIDE SEQUENCE [LARGE SCALE GENOMIC DNA]</scope>
    <source>
        <strain>AX4</strain>
    </source>
</reference>
<feature type="chain" id="PRO_0000363385" description="Midasin">
    <location>
        <begin position="1"/>
        <end position="5900"/>
    </location>
</feature>
<feature type="domain" description="VWFA" evidence="3">
    <location>
        <begin position="5696"/>
        <end position="5889"/>
    </location>
</feature>
<feature type="region of interest" description="Disordered" evidence="4">
    <location>
        <begin position="250"/>
        <end position="270"/>
    </location>
</feature>
<feature type="region of interest" description="AAA-ATPase protomer 1" evidence="2">
    <location>
        <begin position="278"/>
        <end position="583"/>
    </location>
</feature>
<feature type="region of interest" description="AAA-ATPase protomer 2" evidence="2">
    <location>
        <begin position="673"/>
        <end position="1012"/>
    </location>
</feature>
<feature type="region of interest" description="Disordered" evidence="4">
    <location>
        <begin position="796"/>
        <end position="826"/>
    </location>
</feature>
<feature type="region of interest" description="AAA-ATPase protomer 3" evidence="2">
    <location>
        <begin position="1101"/>
        <end position="1346"/>
    </location>
</feature>
<feature type="region of interest" description="AAA-ATPase protomer 4" evidence="2">
    <location>
        <begin position="1411"/>
        <end position="1721"/>
    </location>
</feature>
<feature type="region of interest" description="AAA-ATPase protomer 5" evidence="2">
    <location>
        <begin position="1840"/>
        <end position="2089"/>
    </location>
</feature>
<feature type="region of interest" description="AAA-ATPase protomer 6" evidence="2">
    <location>
        <begin position="2167"/>
        <end position="2451"/>
    </location>
</feature>
<feature type="region of interest" description="Linker" evidence="1">
    <location>
        <begin position="2562"/>
        <end position="4965"/>
    </location>
</feature>
<feature type="region of interest" description="Disordered" evidence="4">
    <location>
        <begin position="4932"/>
        <end position="5598"/>
    </location>
</feature>
<feature type="compositionally biased region" description="Low complexity" evidence="4">
    <location>
        <begin position="797"/>
        <end position="821"/>
    </location>
</feature>
<feature type="compositionally biased region" description="Acidic residues" evidence="4">
    <location>
        <begin position="4984"/>
        <end position="5008"/>
    </location>
</feature>
<feature type="compositionally biased region" description="Basic and acidic residues" evidence="4">
    <location>
        <begin position="5009"/>
        <end position="5055"/>
    </location>
</feature>
<feature type="compositionally biased region" description="Acidic residues" evidence="4">
    <location>
        <begin position="5056"/>
        <end position="5076"/>
    </location>
</feature>
<feature type="compositionally biased region" description="Basic and acidic residues" evidence="4">
    <location>
        <begin position="5079"/>
        <end position="5113"/>
    </location>
</feature>
<feature type="compositionally biased region" description="Acidic residues" evidence="4">
    <location>
        <begin position="5114"/>
        <end position="5130"/>
    </location>
</feature>
<feature type="compositionally biased region" description="Acidic residues" evidence="4">
    <location>
        <begin position="5139"/>
        <end position="5156"/>
    </location>
</feature>
<feature type="compositionally biased region" description="Basic and acidic residues" evidence="4">
    <location>
        <begin position="5159"/>
        <end position="5173"/>
    </location>
</feature>
<feature type="compositionally biased region" description="Acidic residues" evidence="4">
    <location>
        <begin position="5174"/>
        <end position="5199"/>
    </location>
</feature>
<feature type="compositionally biased region" description="Basic and acidic residues" evidence="4">
    <location>
        <begin position="5213"/>
        <end position="5224"/>
    </location>
</feature>
<feature type="compositionally biased region" description="Acidic residues" evidence="4">
    <location>
        <begin position="5225"/>
        <end position="5255"/>
    </location>
</feature>
<feature type="compositionally biased region" description="Acidic residues" evidence="4">
    <location>
        <begin position="5273"/>
        <end position="5286"/>
    </location>
</feature>
<feature type="compositionally biased region" description="Basic and acidic residues" evidence="4">
    <location>
        <begin position="5297"/>
        <end position="5313"/>
    </location>
</feature>
<feature type="compositionally biased region" description="Polar residues" evidence="4">
    <location>
        <begin position="5339"/>
        <end position="5349"/>
    </location>
</feature>
<feature type="compositionally biased region" description="Basic and acidic residues" evidence="4">
    <location>
        <begin position="5410"/>
        <end position="5442"/>
    </location>
</feature>
<feature type="compositionally biased region" description="Low complexity" evidence="4">
    <location>
        <begin position="5448"/>
        <end position="5460"/>
    </location>
</feature>
<feature type="compositionally biased region" description="Acidic residues" evidence="4">
    <location>
        <begin position="5469"/>
        <end position="5487"/>
    </location>
</feature>
<feature type="compositionally biased region" description="Basic and acidic residues" evidence="4">
    <location>
        <begin position="5488"/>
        <end position="5536"/>
    </location>
</feature>
<feature type="compositionally biased region" description="Basic and acidic residues" evidence="4">
    <location>
        <begin position="5551"/>
        <end position="5570"/>
    </location>
</feature>
<feature type="compositionally biased region" description="Acidic residues" evidence="4">
    <location>
        <begin position="5571"/>
        <end position="5590"/>
    </location>
</feature>
<feature type="binding site" evidence="2">
    <location>
        <begin position="302"/>
        <end position="309"/>
    </location>
    <ligand>
        <name>ATP</name>
        <dbReference type="ChEBI" id="CHEBI:30616"/>
    </ligand>
</feature>
<feature type="binding site" evidence="2">
    <location>
        <begin position="689"/>
        <end position="696"/>
    </location>
    <ligand>
        <name>ATP</name>
        <dbReference type="ChEBI" id="CHEBI:30616"/>
    </ligand>
</feature>
<feature type="binding site" evidence="2">
    <location>
        <begin position="1135"/>
        <end position="1142"/>
    </location>
    <ligand>
        <name>ATP</name>
        <dbReference type="ChEBI" id="CHEBI:30616"/>
    </ligand>
</feature>
<feature type="binding site" evidence="2">
    <location>
        <begin position="1438"/>
        <end position="1445"/>
    </location>
    <ligand>
        <name>ATP</name>
        <dbReference type="ChEBI" id="CHEBI:30616"/>
    </ligand>
</feature>
<feature type="binding site" evidence="2">
    <location>
        <begin position="1852"/>
        <end position="1859"/>
    </location>
    <ligand>
        <name>ATP</name>
        <dbReference type="ChEBI" id="CHEBI:30616"/>
    </ligand>
</feature>
<feature type="binding site" evidence="2">
    <location>
        <begin position="2184"/>
        <end position="2191"/>
    </location>
    <ligand>
        <name>ATP</name>
        <dbReference type="ChEBI" id="CHEBI:30616"/>
    </ligand>
</feature>
<proteinExistence type="inferred from homology"/>
<keyword id="KW-0067">ATP-binding</keyword>
<keyword id="KW-0143">Chaperone</keyword>
<keyword id="KW-0547">Nucleotide-binding</keyword>
<keyword id="KW-0539">Nucleus</keyword>
<keyword id="KW-1185">Reference proteome</keyword>
<organism>
    <name type="scientific">Dictyostelium discoideum</name>
    <name type="common">Social amoeba</name>
    <dbReference type="NCBI Taxonomy" id="44689"/>
    <lineage>
        <taxon>Eukaryota</taxon>
        <taxon>Amoebozoa</taxon>
        <taxon>Evosea</taxon>
        <taxon>Eumycetozoa</taxon>
        <taxon>Dictyostelia</taxon>
        <taxon>Dictyosteliales</taxon>
        <taxon>Dictyosteliaceae</taxon>
        <taxon>Dictyostelium</taxon>
    </lineage>
</organism>
<name>MDN1_DICDI</name>
<gene>
    <name type="primary">mdn1</name>
    <name type="ORF">DDB_G0295765</name>
</gene>
<evidence type="ECO:0000250" key="1">
    <source>
        <dbReference type="UniProtKB" id="Q12019"/>
    </source>
</evidence>
<evidence type="ECO:0000255" key="2"/>
<evidence type="ECO:0000255" key="3">
    <source>
        <dbReference type="PROSITE-ProRule" id="PRU00219"/>
    </source>
</evidence>
<evidence type="ECO:0000256" key="4">
    <source>
        <dbReference type="SAM" id="MobiDB-lite"/>
    </source>
</evidence>
<evidence type="ECO:0000305" key="5"/>